<name>HEM3_BACSU</name>
<reference key="1">
    <citation type="journal article" date="1990" name="J. Bacteriol.">
        <title>Cloning and characterization of the hemA region of the Bacillus subtilis chromosome.</title>
        <authorList>
            <person name="Petricek M."/>
            <person name="Rutberg L."/>
            <person name="Schroeder I."/>
            <person name="Hederstedt L."/>
        </authorList>
    </citation>
    <scope>NUCLEOTIDE SEQUENCE [GENOMIC DNA]</scope>
</reference>
<reference key="2">
    <citation type="journal article" date="1997" name="Nature">
        <title>The complete genome sequence of the Gram-positive bacterium Bacillus subtilis.</title>
        <authorList>
            <person name="Kunst F."/>
            <person name="Ogasawara N."/>
            <person name="Moszer I."/>
            <person name="Albertini A.M."/>
            <person name="Alloni G."/>
            <person name="Azevedo V."/>
            <person name="Bertero M.G."/>
            <person name="Bessieres P."/>
            <person name="Bolotin A."/>
            <person name="Borchert S."/>
            <person name="Borriss R."/>
            <person name="Boursier L."/>
            <person name="Brans A."/>
            <person name="Braun M."/>
            <person name="Brignell S.C."/>
            <person name="Bron S."/>
            <person name="Brouillet S."/>
            <person name="Bruschi C.V."/>
            <person name="Caldwell B."/>
            <person name="Capuano V."/>
            <person name="Carter N.M."/>
            <person name="Choi S.-K."/>
            <person name="Codani J.-J."/>
            <person name="Connerton I.F."/>
            <person name="Cummings N.J."/>
            <person name="Daniel R.A."/>
            <person name="Denizot F."/>
            <person name="Devine K.M."/>
            <person name="Duesterhoeft A."/>
            <person name="Ehrlich S.D."/>
            <person name="Emmerson P.T."/>
            <person name="Entian K.-D."/>
            <person name="Errington J."/>
            <person name="Fabret C."/>
            <person name="Ferrari E."/>
            <person name="Foulger D."/>
            <person name="Fritz C."/>
            <person name="Fujita M."/>
            <person name="Fujita Y."/>
            <person name="Fuma S."/>
            <person name="Galizzi A."/>
            <person name="Galleron N."/>
            <person name="Ghim S.-Y."/>
            <person name="Glaser P."/>
            <person name="Goffeau A."/>
            <person name="Golightly E.J."/>
            <person name="Grandi G."/>
            <person name="Guiseppi G."/>
            <person name="Guy B.J."/>
            <person name="Haga K."/>
            <person name="Haiech J."/>
            <person name="Harwood C.R."/>
            <person name="Henaut A."/>
            <person name="Hilbert H."/>
            <person name="Holsappel S."/>
            <person name="Hosono S."/>
            <person name="Hullo M.-F."/>
            <person name="Itaya M."/>
            <person name="Jones L.-M."/>
            <person name="Joris B."/>
            <person name="Karamata D."/>
            <person name="Kasahara Y."/>
            <person name="Klaerr-Blanchard M."/>
            <person name="Klein C."/>
            <person name="Kobayashi Y."/>
            <person name="Koetter P."/>
            <person name="Koningstein G."/>
            <person name="Krogh S."/>
            <person name="Kumano M."/>
            <person name="Kurita K."/>
            <person name="Lapidus A."/>
            <person name="Lardinois S."/>
            <person name="Lauber J."/>
            <person name="Lazarevic V."/>
            <person name="Lee S.-M."/>
            <person name="Levine A."/>
            <person name="Liu H."/>
            <person name="Masuda S."/>
            <person name="Mauel C."/>
            <person name="Medigue C."/>
            <person name="Medina N."/>
            <person name="Mellado R.P."/>
            <person name="Mizuno M."/>
            <person name="Moestl D."/>
            <person name="Nakai S."/>
            <person name="Noback M."/>
            <person name="Noone D."/>
            <person name="O'Reilly M."/>
            <person name="Ogawa K."/>
            <person name="Ogiwara A."/>
            <person name="Oudega B."/>
            <person name="Park S.-H."/>
            <person name="Parro V."/>
            <person name="Pohl T.M."/>
            <person name="Portetelle D."/>
            <person name="Porwollik S."/>
            <person name="Prescott A.M."/>
            <person name="Presecan E."/>
            <person name="Pujic P."/>
            <person name="Purnelle B."/>
            <person name="Rapoport G."/>
            <person name="Rey M."/>
            <person name="Reynolds S."/>
            <person name="Rieger M."/>
            <person name="Rivolta C."/>
            <person name="Rocha E."/>
            <person name="Roche B."/>
            <person name="Rose M."/>
            <person name="Sadaie Y."/>
            <person name="Sato T."/>
            <person name="Scanlan E."/>
            <person name="Schleich S."/>
            <person name="Schroeter R."/>
            <person name="Scoffone F."/>
            <person name="Sekiguchi J."/>
            <person name="Sekowska A."/>
            <person name="Seror S.J."/>
            <person name="Serror P."/>
            <person name="Shin B.-S."/>
            <person name="Soldo B."/>
            <person name="Sorokin A."/>
            <person name="Tacconi E."/>
            <person name="Takagi T."/>
            <person name="Takahashi H."/>
            <person name="Takemaru K."/>
            <person name="Takeuchi M."/>
            <person name="Tamakoshi A."/>
            <person name="Tanaka T."/>
            <person name="Terpstra P."/>
            <person name="Tognoni A."/>
            <person name="Tosato V."/>
            <person name="Uchiyama S."/>
            <person name="Vandenbol M."/>
            <person name="Vannier F."/>
            <person name="Vassarotti A."/>
            <person name="Viari A."/>
            <person name="Wambutt R."/>
            <person name="Wedler E."/>
            <person name="Wedler H."/>
            <person name="Weitzenegger T."/>
            <person name="Winters P."/>
            <person name="Wipat A."/>
            <person name="Yamamoto H."/>
            <person name="Yamane K."/>
            <person name="Yasumoto K."/>
            <person name="Yata K."/>
            <person name="Yoshida K."/>
            <person name="Yoshikawa H.-F."/>
            <person name="Zumstein E."/>
            <person name="Yoshikawa H."/>
            <person name="Danchin A."/>
        </authorList>
    </citation>
    <scope>NUCLEOTIDE SEQUENCE [LARGE SCALE GENOMIC DNA]</scope>
    <source>
        <strain>168</strain>
    </source>
</reference>
<proteinExistence type="inferred from homology"/>
<accession>P16616</accession>
<keyword id="KW-0627">Porphyrin biosynthesis</keyword>
<keyword id="KW-1185">Reference proteome</keyword>
<keyword id="KW-0808">Transferase</keyword>
<feature type="chain" id="PRO_0000142910" description="Porphobilinogen deaminase">
    <location>
        <begin position="1"/>
        <end position="313"/>
    </location>
</feature>
<feature type="modified residue" description="S-(dipyrrolylmethanemethyl)cysteine" evidence="1">
    <location>
        <position position="242"/>
    </location>
</feature>
<evidence type="ECO:0000250" key="1"/>
<evidence type="ECO:0000305" key="2"/>
<gene>
    <name type="primary">hemC</name>
    <name type="ordered locus">BSU28150</name>
</gene>
<protein>
    <recommendedName>
        <fullName>Porphobilinogen deaminase</fullName>
        <shortName>PBG</shortName>
        <ecNumber>2.5.1.61</ecNumber>
    </recommendedName>
    <alternativeName>
        <fullName>Hydroxymethylbilane synthase</fullName>
        <shortName>HMBS</shortName>
    </alternativeName>
    <alternativeName>
        <fullName>Pre-uroporphyrinogen synthase</fullName>
    </alternativeName>
</protein>
<comment type="function">
    <text evidence="1">Tetrapolymerization of the monopyrrole PBG into the hydroxymethylbilane pre-uroporphyrinogen in several discrete steps.</text>
</comment>
<comment type="catalytic activity">
    <reaction>
        <text>4 porphobilinogen + H2O = hydroxymethylbilane + 4 NH4(+)</text>
        <dbReference type="Rhea" id="RHEA:13185"/>
        <dbReference type="ChEBI" id="CHEBI:15377"/>
        <dbReference type="ChEBI" id="CHEBI:28938"/>
        <dbReference type="ChEBI" id="CHEBI:57845"/>
        <dbReference type="ChEBI" id="CHEBI:58126"/>
        <dbReference type="EC" id="2.5.1.61"/>
    </reaction>
</comment>
<comment type="cofactor">
    <cofactor>
        <name>dipyrromethane</name>
        <dbReference type="ChEBI" id="CHEBI:60342"/>
    </cofactor>
    <text>Binds 1 dipyrromethane group covalently.</text>
</comment>
<comment type="pathway">
    <text>Porphyrin-containing compound metabolism; protoporphyrin-IX biosynthesis; coproporphyrinogen-III from 5-aminolevulinate: step 2/4.</text>
</comment>
<comment type="subunit">
    <text>Monomer.</text>
</comment>
<comment type="miscellaneous">
    <text evidence="1">The porphobilinogen subunits are added to the dipyrromethane group.</text>
</comment>
<comment type="similarity">
    <text evidence="2">Belongs to the HMBS family.</text>
</comment>
<dbReference type="EC" id="2.5.1.61"/>
<dbReference type="EMBL" id="M57676">
    <property type="protein sequence ID" value="AAA22512.1"/>
    <property type="molecule type" value="Genomic_DNA"/>
</dbReference>
<dbReference type="EMBL" id="AL009126">
    <property type="protein sequence ID" value="CAB14775.1"/>
    <property type="molecule type" value="Genomic_DNA"/>
</dbReference>
<dbReference type="PIR" id="C35252">
    <property type="entry name" value="IBBS"/>
</dbReference>
<dbReference type="RefSeq" id="NP_390693.1">
    <property type="nucleotide sequence ID" value="NC_000964.3"/>
</dbReference>
<dbReference type="RefSeq" id="WP_010886587.1">
    <property type="nucleotide sequence ID" value="NZ_OZ025638.1"/>
</dbReference>
<dbReference type="SMR" id="P16616"/>
<dbReference type="FunCoup" id="P16616">
    <property type="interactions" value="738"/>
</dbReference>
<dbReference type="STRING" id="224308.BSU28150"/>
<dbReference type="jPOST" id="P16616"/>
<dbReference type="PaxDb" id="224308-BSU28150"/>
<dbReference type="EnsemblBacteria" id="CAB14775">
    <property type="protein sequence ID" value="CAB14775"/>
    <property type="gene ID" value="BSU_28150"/>
</dbReference>
<dbReference type="GeneID" id="937488"/>
<dbReference type="KEGG" id="bsu:BSU28150"/>
<dbReference type="PATRIC" id="fig|224308.43.peg.2942"/>
<dbReference type="eggNOG" id="COG0181">
    <property type="taxonomic scope" value="Bacteria"/>
</dbReference>
<dbReference type="InParanoid" id="P16616"/>
<dbReference type="OrthoDB" id="9810298at2"/>
<dbReference type="PhylomeDB" id="P16616"/>
<dbReference type="BioCyc" id="BSUB:BSU28150-MONOMER"/>
<dbReference type="UniPathway" id="UPA00251">
    <property type="reaction ID" value="UER00319"/>
</dbReference>
<dbReference type="Proteomes" id="UP000001570">
    <property type="component" value="Chromosome"/>
</dbReference>
<dbReference type="GO" id="GO:0005737">
    <property type="term" value="C:cytoplasm"/>
    <property type="evidence" value="ECO:0000318"/>
    <property type="project" value="GO_Central"/>
</dbReference>
<dbReference type="GO" id="GO:0004418">
    <property type="term" value="F:hydroxymethylbilane synthase activity"/>
    <property type="evidence" value="ECO:0000318"/>
    <property type="project" value="GO_Central"/>
</dbReference>
<dbReference type="GO" id="GO:0006783">
    <property type="term" value="P:heme biosynthetic process"/>
    <property type="evidence" value="ECO:0000318"/>
    <property type="project" value="GO_Central"/>
</dbReference>
<dbReference type="GO" id="GO:0006782">
    <property type="term" value="P:protoporphyrinogen IX biosynthetic process"/>
    <property type="evidence" value="ECO:0007669"/>
    <property type="project" value="UniProtKB-UniRule"/>
</dbReference>
<dbReference type="CDD" id="cd13646">
    <property type="entry name" value="PBP2_EcHMBS_like"/>
    <property type="match status" value="1"/>
</dbReference>
<dbReference type="FunFam" id="3.30.160.40:FF:000001">
    <property type="entry name" value="Porphobilinogen deaminase"/>
    <property type="match status" value="1"/>
</dbReference>
<dbReference type="FunFam" id="3.40.190.10:FF:000004">
    <property type="entry name" value="Porphobilinogen deaminase"/>
    <property type="match status" value="1"/>
</dbReference>
<dbReference type="FunFam" id="3.40.190.10:FF:000005">
    <property type="entry name" value="Porphobilinogen deaminase"/>
    <property type="match status" value="1"/>
</dbReference>
<dbReference type="Gene3D" id="3.40.190.10">
    <property type="entry name" value="Periplasmic binding protein-like II"/>
    <property type="match status" value="2"/>
</dbReference>
<dbReference type="Gene3D" id="3.30.160.40">
    <property type="entry name" value="Porphobilinogen deaminase, C-terminal domain"/>
    <property type="match status" value="1"/>
</dbReference>
<dbReference type="HAMAP" id="MF_00260">
    <property type="entry name" value="Porphobil_deam"/>
    <property type="match status" value="1"/>
</dbReference>
<dbReference type="InterPro" id="IPR000860">
    <property type="entry name" value="HemC"/>
</dbReference>
<dbReference type="InterPro" id="IPR022419">
    <property type="entry name" value="Porphobilin_deaminase_cofac_BS"/>
</dbReference>
<dbReference type="InterPro" id="IPR022417">
    <property type="entry name" value="Porphobilin_deaminase_N"/>
</dbReference>
<dbReference type="InterPro" id="IPR022418">
    <property type="entry name" value="Porphobilinogen_deaminase_C"/>
</dbReference>
<dbReference type="InterPro" id="IPR036803">
    <property type="entry name" value="Porphobilinogen_deaminase_C_sf"/>
</dbReference>
<dbReference type="NCBIfam" id="TIGR00212">
    <property type="entry name" value="hemC"/>
    <property type="match status" value="1"/>
</dbReference>
<dbReference type="PANTHER" id="PTHR11557">
    <property type="entry name" value="PORPHOBILINOGEN DEAMINASE"/>
    <property type="match status" value="1"/>
</dbReference>
<dbReference type="PANTHER" id="PTHR11557:SF0">
    <property type="entry name" value="PORPHOBILINOGEN DEAMINASE"/>
    <property type="match status" value="1"/>
</dbReference>
<dbReference type="Pfam" id="PF01379">
    <property type="entry name" value="Porphobil_deam"/>
    <property type="match status" value="1"/>
</dbReference>
<dbReference type="Pfam" id="PF03900">
    <property type="entry name" value="Porphobil_deamC"/>
    <property type="match status" value="1"/>
</dbReference>
<dbReference type="PIRSF" id="PIRSF001438">
    <property type="entry name" value="4pyrrol_synth_OHMeBilane_synth"/>
    <property type="match status" value="1"/>
</dbReference>
<dbReference type="PRINTS" id="PR00151">
    <property type="entry name" value="PORPHBDMNASE"/>
</dbReference>
<dbReference type="SUPFAM" id="SSF53850">
    <property type="entry name" value="Periplasmic binding protein-like II"/>
    <property type="match status" value="1"/>
</dbReference>
<dbReference type="SUPFAM" id="SSF54782">
    <property type="entry name" value="Porphobilinogen deaminase (hydroxymethylbilane synthase), C-terminal domain"/>
    <property type="match status" value="1"/>
</dbReference>
<dbReference type="PROSITE" id="PS00533">
    <property type="entry name" value="PORPHOBILINOGEN_DEAM"/>
    <property type="match status" value="1"/>
</dbReference>
<organism>
    <name type="scientific">Bacillus subtilis (strain 168)</name>
    <dbReference type="NCBI Taxonomy" id="224308"/>
    <lineage>
        <taxon>Bacteria</taxon>
        <taxon>Bacillati</taxon>
        <taxon>Bacillota</taxon>
        <taxon>Bacilli</taxon>
        <taxon>Bacillales</taxon>
        <taxon>Bacillaceae</taxon>
        <taxon>Bacillus</taxon>
    </lineage>
</organism>
<sequence length="314" mass="34838">MMRTIKVGSRRSKLAMTQTKWVIQKLKEINPSFAFEIKEIVTKGDRIVDVTLSKVGGKGLFVKEIEQALLNEEIDMAVHSMKDMPAVLPEGLVIGCIPEREDPRDALISKNRVKLSEMKKGAVIGTSSLRRSAQLLIERPDLTIKWIRGNIDTRLQKLETEDYDAIILAAAGLSRMGWKQDVVTEFLEPERCLPAVGQGALAIECRESDEELLALFSQFTDEYTKRTVLAERAFLNAMEGGCQVPIAGYSVLNGQDEIEMTGLVASPDGKIIFKETVTGNDPEEVGKRCAALMADKGAKDLIDRVKRELDEDGK</sequence>